<proteinExistence type="evidence at protein level"/>
<sequence length="329" mass="37534">MAAQYGSMSFNPSTPGASYGPGRQEPRNSQLRIVLVGKTGAGKSATGNSILGRKVFHSGTAAKSITKKCEKRSSSWKETELVVVDTPGIFDTEVPNAETSKEIIRCILLTSPGPHALLLVVPLGRYTEEEHKATEKILKMFGERARSFMILIFTRKDDLGDTNLHDYLREAPEDIQDLMDIFGDRYCALNNKATGAEQEAQRAQLLGLIQRVVRENKEGCYTNRMYQRAEEEIQKQTQAMQELHRVELEREKARIREEYEEKIRKLEDKVEQEKRKKQMEKKLAEQEAHYAVRQQRARTEVESKDGILELIMTALQIASFILLRLFAED</sequence>
<keyword id="KW-0002">3D-structure</keyword>
<keyword id="KW-0175">Coiled coil</keyword>
<keyword id="KW-0963">Cytoplasm</keyword>
<keyword id="KW-0342">GTP-binding</keyword>
<keyword id="KW-0547">Nucleotide-binding</keyword>
<keyword id="KW-0597">Phosphoprotein</keyword>
<keyword id="KW-1267">Proteomics identification</keyword>
<keyword id="KW-1185">Reference proteome</keyword>
<protein>
    <recommendedName>
        <fullName>GTPase IMAP family member 4</fullName>
    </recommendedName>
    <alternativeName>
        <fullName>Immunity-associated nucleotide 1 protein</fullName>
        <shortName>IAN-1</shortName>
        <shortName>hIAN1</shortName>
    </alternativeName>
    <alternativeName>
        <fullName>Immunity-associated protein 4</fullName>
    </alternativeName>
</protein>
<evidence type="ECO:0000250" key="1"/>
<evidence type="ECO:0000250" key="2">
    <source>
        <dbReference type="UniProtKB" id="Q99JY3"/>
    </source>
</evidence>
<evidence type="ECO:0000255" key="3"/>
<evidence type="ECO:0000255" key="4">
    <source>
        <dbReference type="PROSITE-ProRule" id="PRU00116"/>
    </source>
</evidence>
<evidence type="ECO:0000255" key="5">
    <source>
        <dbReference type="PROSITE-ProRule" id="PRU01057"/>
    </source>
</evidence>
<evidence type="ECO:0000256" key="6">
    <source>
        <dbReference type="SAM" id="MobiDB-lite"/>
    </source>
</evidence>
<evidence type="ECO:0000269" key="7">
    <source>
    </source>
</evidence>
<evidence type="ECO:0000269" key="8">
    <source ref="8"/>
</evidence>
<evidence type="ECO:0000305" key="9"/>
<evidence type="ECO:0007744" key="10">
    <source>
        <dbReference type="PDB" id="3LXX"/>
    </source>
</evidence>
<evidence type="ECO:0007829" key="11">
    <source>
        <dbReference type="PDB" id="3LXX"/>
    </source>
</evidence>
<dbReference type="EMBL" id="AF117333">
    <property type="protein sequence ID" value="AAO15308.1"/>
    <property type="molecule type" value="mRNA"/>
</dbReference>
<dbReference type="EMBL" id="AK001972">
    <property type="protein sequence ID" value="BAA92010.1"/>
    <property type="molecule type" value="mRNA"/>
</dbReference>
<dbReference type="EMBL" id="BC020657">
    <property type="protein sequence ID" value="AAH20657.1"/>
    <property type="molecule type" value="mRNA"/>
</dbReference>
<dbReference type="CCDS" id="CCDS5904.1"/>
<dbReference type="RefSeq" id="NP_060796.1">
    <property type="nucleotide sequence ID" value="NM_018326.3"/>
</dbReference>
<dbReference type="PDB" id="3LXX">
    <property type="method" value="X-ray"/>
    <property type="resolution" value="2.15 A"/>
    <property type="chains" value="A=20-240"/>
</dbReference>
<dbReference type="PDBsum" id="3LXX"/>
<dbReference type="SMR" id="Q9NUV9"/>
<dbReference type="BioGRID" id="120589">
    <property type="interactions" value="4"/>
</dbReference>
<dbReference type="FunCoup" id="Q9NUV9">
    <property type="interactions" value="22"/>
</dbReference>
<dbReference type="IntAct" id="Q9NUV9">
    <property type="interactions" value="3"/>
</dbReference>
<dbReference type="MINT" id="Q9NUV9"/>
<dbReference type="STRING" id="9606.ENSP00000419545"/>
<dbReference type="iPTMnet" id="Q9NUV9"/>
<dbReference type="MetOSite" id="Q9NUV9"/>
<dbReference type="PhosphoSitePlus" id="Q9NUV9"/>
<dbReference type="BioMuta" id="GIMAP4"/>
<dbReference type="MassIVE" id="Q9NUV9"/>
<dbReference type="PaxDb" id="9606-ENSP00000255945"/>
<dbReference type="PeptideAtlas" id="Q9NUV9"/>
<dbReference type="ProteomicsDB" id="82724"/>
<dbReference type="Antibodypedia" id="18614">
    <property type="antibodies" value="301 antibodies from 28 providers"/>
</dbReference>
<dbReference type="DNASU" id="55303"/>
<dbReference type="Ensembl" id="ENST00000255945.4">
    <property type="protein sequence ID" value="ENSP00000255945.2"/>
    <property type="gene ID" value="ENSG00000133574.10"/>
</dbReference>
<dbReference type="GeneID" id="55303"/>
<dbReference type="KEGG" id="hsa:55303"/>
<dbReference type="MANE-Select" id="ENST00000255945.4">
    <property type="protein sequence ID" value="ENSP00000255945.2"/>
    <property type="RefSeq nucleotide sequence ID" value="NM_018326.3"/>
    <property type="RefSeq protein sequence ID" value="NP_060796.1"/>
</dbReference>
<dbReference type="UCSC" id="uc003whl.4">
    <property type="organism name" value="human"/>
</dbReference>
<dbReference type="AGR" id="HGNC:21872"/>
<dbReference type="CTD" id="55303"/>
<dbReference type="DisGeNET" id="55303"/>
<dbReference type="GeneCards" id="GIMAP4"/>
<dbReference type="HGNC" id="HGNC:21872">
    <property type="gene designation" value="GIMAP4"/>
</dbReference>
<dbReference type="HPA" id="ENSG00000133574">
    <property type="expression patterns" value="Tissue enhanced (lymphoid)"/>
</dbReference>
<dbReference type="MIM" id="608087">
    <property type="type" value="gene"/>
</dbReference>
<dbReference type="neXtProt" id="NX_Q9NUV9"/>
<dbReference type="OpenTargets" id="ENSG00000133574"/>
<dbReference type="PharmGKB" id="PA128394681"/>
<dbReference type="VEuPathDB" id="HostDB:ENSG00000133574"/>
<dbReference type="eggNOG" id="ENOG502R7PE">
    <property type="taxonomic scope" value="Eukaryota"/>
</dbReference>
<dbReference type="GeneTree" id="ENSGT00940000159317"/>
<dbReference type="HOGENOM" id="CLU_010468_0_0_1"/>
<dbReference type="InParanoid" id="Q9NUV9"/>
<dbReference type="OMA" id="YLMEAPE"/>
<dbReference type="OrthoDB" id="5985928at2759"/>
<dbReference type="PAN-GO" id="Q9NUV9">
    <property type="GO annotations" value="1 GO annotation based on evolutionary models"/>
</dbReference>
<dbReference type="PhylomeDB" id="Q9NUV9"/>
<dbReference type="TreeFam" id="TF330845"/>
<dbReference type="PathwayCommons" id="Q9NUV9"/>
<dbReference type="SignaLink" id="Q9NUV9"/>
<dbReference type="BioGRID-ORCS" id="55303">
    <property type="hits" value="12 hits in 1144 CRISPR screens"/>
</dbReference>
<dbReference type="ChiTaRS" id="GIMAP4">
    <property type="organism name" value="human"/>
</dbReference>
<dbReference type="EvolutionaryTrace" id="Q9NUV9"/>
<dbReference type="GeneWiki" id="GIMAP4"/>
<dbReference type="GenomeRNAi" id="55303"/>
<dbReference type="Pharos" id="Q9NUV9">
    <property type="development level" value="Tbio"/>
</dbReference>
<dbReference type="PRO" id="PR:Q9NUV9"/>
<dbReference type="Proteomes" id="UP000005640">
    <property type="component" value="Chromosome 7"/>
</dbReference>
<dbReference type="RNAct" id="Q9NUV9">
    <property type="molecule type" value="protein"/>
</dbReference>
<dbReference type="Bgee" id="ENSG00000133574">
    <property type="expression patterns" value="Expressed in monocyte and 175 other cell types or tissues"/>
</dbReference>
<dbReference type="ExpressionAtlas" id="Q9NUV9">
    <property type="expression patterns" value="baseline and differential"/>
</dbReference>
<dbReference type="GO" id="GO:0005829">
    <property type="term" value="C:cytosol"/>
    <property type="evidence" value="ECO:0000314"/>
    <property type="project" value="UniProtKB"/>
</dbReference>
<dbReference type="GO" id="GO:0043231">
    <property type="term" value="C:intracellular membrane-bounded organelle"/>
    <property type="evidence" value="ECO:0000314"/>
    <property type="project" value="HPA"/>
</dbReference>
<dbReference type="GO" id="GO:0005525">
    <property type="term" value="F:GTP binding"/>
    <property type="evidence" value="ECO:0007669"/>
    <property type="project" value="UniProtKB-KW"/>
</dbReference>
<dbReference type="CDD" id="cd01852">
    <property type="entry name" value="AIG1"/>
    <property type="match status" value="1"/>
</dbReference>
<dbReference type="FunFam" id="3.40.50.300:FF:000366">
    <property type="entry name" value="GTPase, IMAP family member 2"/>
    <property type="match status" value="1"/>
</dbReference>
<dbReference type="Gene3D" id="3.40.50.300">
    <property type="entry name" value="P-loop containing nucleotide triphosphate hydrolases"/>
    <property type="match status" value="1"/>
</dbReference>
<dbReference type="InterPro" id="IPR006703">
    <property type="entry name" value="G_AIG1"/>
</dbReference>
<dbReference type="InterPro" id="IPR045058">
    <property type="entry name" value="GIMA/IAN/Toc"/>
</dbReference>
<dbReference type="InterPro" id="IPR027417">
    <property type="entry name" value="P-loop_NTPase"/>
</dbReference>
<dbReference type="PANTHER" id="PTHR10903:SF182">
    <property type="entry name" value="GTPASE IMAP FAMILY MEMBER 4"/>
    <property type="match status" value="1"/>
</dbReference>
<dbReference type="PANTHER" id="PTHR10903">
    <property type="entry name" value="GTPASE, IMAP FAMILY MEMBER-RELATED"/>
    <property type="match status" value="1"/>
</dbReference>
<dbReference type="Pfam" id="PF04548">
    <property type="entry name" value="AIG1"/>
    <property type="match status" value="1"/>
</dbReference>
<dbReference type="SUPFAM" id="SSF52540">
    <property type="entry name" value="P-loop containing nucleoside triphosphate hydrolases"/>
    <property type="match status" value="1"/>
</dbReference>
<dbReference type="PROSITE" id="PS51720">
    <property type="entry name" value="G_AIG1"/>
    <property type="match status" value="1"/>
</dbReference>
<accession>Q9NUV9</accession>
<reference key="1">
    <citation type="journal article" date="2002" name="Blood">
        <title>Human immune associated nucleotide 1: a member of a new guanosine triphosphatase family expressed in resting T and B cells.</title>
        <authorList>
            <person name="Cambot M."/>
            <person name="Aresta S."/>
            <person name="Kahn-Perles B."/>
            <person name="de Gunzburg J."/>
            <person name="Romeo P.-H."/>
        </authorList>
    </citation>
    <scope>NUCLEOTIDE SEQUENCE [MRNA]</scope>
    <scope>CHARACTERIZATION</scope>
    <source>
        <tissue>T-cell lymphoma</tissue>
    </source>
</reference>
<reference key="2">
    <citation type="submission" date="1998-12" db="EMBL/GenBank/DDBJ databases">
        <authorList>
            <person name="Liu Y.Q."/>
            <person name="Liu B."/>
            <person name="Zhao B."/>
            <person name="Wang X.Y."/>
            <person name="Song L."/>
            <person name="Ye J."/>
            <person name="Sheng H."/>
            <person name="Gao Y."/>
            <person name="Zhang C.L."/>
            <person name="Zhang J."/>
            <person name="Wei Y.J."/>
            <person name="Sun Y.H."/>
            <person name="Jiang Y.X."/>
            <person name="Zhao X.W."/>
            <person name="Liu S."/>
            <person name="Liu L.S."/>
            <person name="Ding J.F."/>
            <person name="Gao R.L."/>
            <person name="Wu Q.Y."/>
            <person name="Quiang B.Q."/>
            <person name="Yuan J.G."/>
            <person name="Liew C.C."/>
            <person name="Zhao M.S."/>
            <person name="Hui R.T."/>
        </authorList>
    </citation>
    <scope>NUCLEOTIDE SEQUENCE [LARGE SCALE MRNA]</scope>
    <source>
        <tissue>Heart</tissue>
    </source>
</reference>
<reference key="3">
    <citation type="journal article" date="2004" name="Nat. Genet.">
        <title>Complete sequencing and characterization of 21,243 full-length human cDNAs.</title>
        <authorList>
            <person name="Ota T."/>
            <person name="Suzuki Y."/>
            <person name="Nishikawa T."/>
            <person name="Otsuki T."/>
            <person name="Sugiyama T."/>
            <person name="Irie R."/>
            <person name="Wakamatsu A."/>
            <person name="Hayashi K."/>
            <person name="Sato H."/>
            <person name="Nagai K."/>
            <person name="Kimura K."/>
            <person name="Makita H."/>
            <person name="Sekine M."/>
            <person name="Obayashi M."/>
            <person name="Nishi T."/>
            <person name="Shibahara T."/>
            <person name="Tanaka T."/>
            <person name="Ishii S."/>
            <person name="Yamamoto J."/>
            <person name="Saito K."/>
            <person name="Kawai Y."/>
            <person name="Isono Y."/>
            <person name="Nakamura Y."/>
            <person name="Nagahari K."/>
            <person name="Murakami K."/>
            <person name="Yasuda T."/>
            <person name="Iwayanagi T."/>
            <person name="Wagatsuma M."/>
            <person name="Shiratori A."/>
            <person name="Sudo H."/>
            <person name="Hosoiri T."/>
            <person name="Kaku Y."/>
            <person name="Kodaira H."/>
            <person name="Kondo H."/>
            <person name="Sugawara M."/>
            <person name="Takahashi M."/>
            <person name="Kanda K."/>
            <person name="Yokoi T."/>
            <person name="Furuya T."/>
            <person name="Kikkawa E."/>
            <person name="Omura Y."/>
            <person name="Abe K."/>
            <person name="Kamihara K."/>
            <person name="Katsuta N."/>
            <person name="Sato K."/>
            <person name="Tanikawa M."/>
            <person name="Yamazaki M."/>
            <person name="Ninomiya K."/>
            <person name="Ishibashi T."/>
            <person name="Yamashita H."/>
            <person name="Murakawa K."/>
            <person name="Fujimori K."/>
            <person name="Tanai H."/>
            <person name="Kimata M."/>
            <person name="Watanabe M."/>
            <person name="Hiraoka S."/>
            <person name="Chiba Y."/>
            <person name="Ishida S."/>
            <person name="Ono Y."/>
            <person name="Takiguchi S."/>
            <person name="Watanabe S."/>
            <person name="Yosida M."/>
            <person name="Hotuta T."/>
            <person name="Kusano J."/>
            <person name="Kanehori K."/>
            <person name="Takahashi-Fujii A."/>
            <person name="Hara H."/>
            <person name="Tanase T.-O."/>
            <person name="Nomura Y."/>
            <person name="Togiya S."/>
            <person name="Komai F."/>
            <person name="Hara R."/>
            <person name="Takeuchi K."/>
            <person name="Arita M."/>
            <person name="Imose N."/>
            <person name="Musashino K."/>
            <person name="Yuuki H."/>
            <person name="Oshima A."/>
            <person name="Sasaki N."/>
            <person name="Aotsuka S."/>
            <person name="Yoshikawa Y."/>
            <person name="Matsunawa H."/>
            <person name="Ichihara T."/>
            <person name="Shiohata N."/>
            <person name="Sano S."/>
            <person name="Moriya S."/>
            <person name="Momiyama H."/>
            <person name="Satoh N."/>
            <person name="Takami S."/>
            <person name="Terashima Y."/>
            <person name="Suzuki O."/>
            <person name="Nakagawa S."/>
            <person name="Senoh A."/>
            <person name="Mizoguchi H."/>
            <person name="Goto Y."/>
            <person name="Shimizu F."/>
            <person name="Wakebe H."/>
            <person name="Hishigaki H."/>
            <person name="Watanabe T."/>
            <person name="Sugiyama A."/>
            <person name="Takemoto M."/>
            <person name="Kawakami B."/>
            <person name="Yamazaki M."/>
            <person name="Watanabe K."/>
            <person name="Kumagai A."/>
            <person name="Itakura S."/>
            <person name="Fukuzumi Y."/>
            <person name="Fujimori Y."/>
            <person name="Komiyama M."/>
            <person name="Tashiro H."/>
            <person name="Tanigami A."/>
            <person name="Fujiwara T."/>
            <person name="Ono T."/>
            <person name="Yamada K."/>
            <person name="Fujii Y."/>
            <person name="Ozaki K."/>
            <person name="Hirao M."/>
            <person name="Ohmori Y."/>
            <person name="Kawabata A."/>
            <person name="Hikiji T."/>
            <person name="Kobatake N."/>
            <person name="Inagaki H."/>
            <person name="Ikema Y."/>
            <person name="Okamoto S."/>
            <person name="Okitani R."/>
            <person name="Kawakami T."/>
            <person name="Noguchi S."/>
            <person name="Itoh T."/>
            <person name="Shigeta K."/>
            <person name="Senba T."/>
            <person name="Matsumura K."/>
            <person name="Nakajima Y."/>
            <person name="Mizuno T."/>
            <person name="Morinaga M."/>
            <person name="Sasaki M."/>
            <person name="Togashi T."/>
            <person name="Oyama M."/>
            <person name="Hata H."/>
            <person name="Watanabe M."/>
            <person name="Komatsu T."/>
            <person name="Mizushima-Sugano J."/>
            <person name="Satoh T."/>
            <person name="Shirai Y."/>
            <person name="Takahashi Y."/>
            <person name="Nakagawa K."/>
            <person name="Okumura K."/>
            <person name="Nagase T."/>
            <person name="Nomura N."/>
            <person name="Kikuchi H."/>
            <person name="Masuho Y."/>
            <person name="Yamashita R."/>
            <person name="Nakai K."/>
            <person name="Yada T."/>
            <person name="Nakamura Y."/>
            <person name="Ohara O."/>
            <person name="Isogai T."/>
            <person name="Sugano S."/>
        </authorList>
    </citation>
    <scope>NUCLEOTIDE SEQUENCE [LARGE SCALE MRNA]</scope>
    <source>
        <tissue>Placenta</tissue>
    </source>
</reference>
<reference key="4">
    <citation type="journal article" date="2004" name="Genome Res.">
        <title>The status, quality, and expansion of the NIH full-length cDNA project: the Mammalian Gene Collection (MGC).</title>
        <authorList>
            <consortium name="The MGC Project Team"/>
        </authorList>
    </citation>
    <scope>NUCLEOTIDE SEQUENCE [LARGE SCALE MRNA]</scope>
    <source>
        <tissue>Lung</tissue>
    </source>
</reference>
<reference key="5">
    <citation type="journal article" date="2006" name="PLoS Biol.">
        <title>IAN family critically regulates survival and development of T lymphocytes.</title>
        <authorList>
            <person name="Nitta T."/>
            <person name="Nasreen M."/>
            <person name="Seike T."/>
            <person name="Goji A."/>
            <person name="Ohigashi I."/>
            <person name="Miyazaki T."/>
            <person name="Ohta T."/>
            <person name="Kanno M."/>
            <person name="Takahama Y."/>
        </authorList>
    </citation>
    <scope>INTERACTION WITH BAX</scope>
</reference>
<reference key="6">
    <citation type="journal article" date="2013" name="Structure">
        <title>Structural insights into the mechanism of GTPase activation in the GIMAP family.</title>
        <authorList>
            <person name="Schwefel D."/>
            <person name="Arasu B.S."/>
            <person name="Marino S.F."/>
            <person name="Lamprecht B."/>
            <person name="Kochert K."/>
            <person name="Rosenbaum E."/>
            <person name="Eichhorst J."/>
            <person name="Wiesner B."/>
            <person name="Behlke J."/>
            <person name="Rocks O."/>
            <person name="Mathas S."/>
            <person name="Daumke O."/>
        </authorList>
    </citation>
    <scope>SUBCELLULAR LOCATION</scope>
    <scope>TISSUE SPECIFICITY</scope>
</reference>
<reference key="7">
    <citation type="journal article" date="2014" name="J. Proteomics">
        <title>An enzyme assisted RP-RPLC approach for in-depth analysis of human liver phosphoproteome.</title>
        <authorList>
            <person name="Bian Y."/>
            <person name="Song C."/>
            <person name="Cheng K."/>
            <person name="Dong M."/>
            <person name="Wang F."/>
            <person name="Huang J."/>
            <person name="Sun D."/>
            <person name="Wang L."/>
            <person name="Ye M."/>
            <person name="Zou H."/>
        </authorList>
    </citation>
    <scope>IDENTIFICATION BY MASS SPECTROMETRY [LARGE SCALE ANALYSIS]</scope>
    <source>
        <tissue>Liver</tissue>
    </source>
</reference>
<reference key="8">
    <citation type="submission" date="2010-03" db="PDB data bank">
        <title>Crystal structure of human GTPase imap family member 4.</title>
        <authorList>
            <consortium name="Structural genomics consortium (SGC)"/>
        </authorList>
    </citation>
    <scope>X-RAY CRYSTALLOGRAPHY (2.15 ANGSTROMS) OF 20-240 IN COMPLEX WITH MAGNESIUM AND GDP</scope>
</reference>
<name>GIMA4_HUMAN</name>
<organism>
    <name type="scientific">Homo sapiens</name>
    <name type="common">Human</name>
    <dbReference type="NCBI Taxonomy" id="9606"/>
    <lineage>
        <taxon>Eukaryota</taxon>
        <taxon>Metazoa</taxon>
        <taxon>Chordata</taxon>
        <taxon>Craniata</taxon>
        <taxon>Vertebrata</taxon>
        <taxon>Euteleostomi</taxon>
        <taxon>Mammalia</taxon>
        <taxon>Eutheria</taxon>
        <taxon>Euarchontoglires</taxon>
        <taxon>Primates</taxon>
        <taxon>Haplorrhini</taxon>
        <taxon>Catarrhini</taxon>
        <taxon>Hominidae</taxon>
        <taxon>Homo</taxon>
    </lineage>
</organism>
<feature type="chain" id="PRO_0000190987" description="GTPase IMAP family member 4">
    <location>
        <begin position="1"/>
        <end position="329"/>
    </location>
</feature>
<feature type="domain" description="AIG1-type G" evidence="5">
    <location>
        <begin position="28"/>
        <end position="230"/>
    </location>
</feature>
<feature type="domain" description="IQ" evidence="4">
    <location>
        <begin position="233"/>
        <end position="262"/>
    </location>
</feature>
<feature type="region of interest" description="Disordered" evidence="6">
    <location>
        <begin position="1"/>
        <end position="26"/>
    </location>
</feature>
<feature type="region of interest" description="G1" evidence="5">
    <location>
        <begin position="37"/>
        <end position="44"/>
    </location>
</feature>
<feature type="region of interest" description="G2" evidence="5">
    <location>
        <begin position="64"/>
        <end position="68"/>
    </location>
</feature>
<feature type="region of interest" description="G3" evidence="5">
    <location>
        <begin position="85"/>
        <end position="88"/>
    </location>
</feature>
<feature type="region of interest" description="G4" evidence="5">
    <location>
        <begin position="154"/>
        <end position="157"/>
    </location>
</feature>
<feature type="region of interest" description="G5" evidence="5">
    <location>
        <begin position="190"/>
        <end position="192"/>
    </location>
</feature>
<feature type="coiled-coil region" evidence="3">
    <location>
        <begin position="188"/>
        <end position="300"/>
    </location>
</feature>
<feature type="compositionally biased region" description="Polar residues" evidence="6">
    <location>
        <begin position="1"/>
        <end position="16"/>
    </location>
</feature>
<feature type="binding site" evidence="8 10">
    <location>
        <begin position="37"/>
        <end position="45"/>
    </location>
    <ligand>
        <name>GTP</name>
        <dbReference type="ChEBI" id="CHEBI:37565"/>
    </ligand>
</feature>
<feature type="binding site" evidence="8 10">
    <location>
        <position position="58"/>
    </location>
    <ligand>
        <name>GTP</name>
        <dbReference type="ChEBI" id="CHEBI:37565"/>
    </ligand>
</feature>
<feature type="binding site" evidence="8 10">
    <location>
        <begin position="155"/>
        <end position="157"/>
    </location>
    <ligand>
        <name>GTP</name>
        <dbReference type="ChEBI" id="CHEBI:37565"/>
    </ligand>
</feature>
<feature type="binding site" evidence="8 10">
    <location>
        <position position="191"/>
    </location>
    <ligand>
        <name>GTP</name>
        <dbReference type="ChEBI" id="CHEBI:37565"/>
    </ligand>
</feature>
<feature type="sequence variant" id="VAR_017306" description="In dbSNP:rs2293172.">
    <original>E</original>
    <variation>D</variation>
    <location>
        <position position="128"/>
    </location>
</feature>
<feature type="strand" evidence="11">
    <location>
        <begin position="30"/>
        <end position="36"/>
    </location>
</feature>
<feature type="helix" evidence="11">
    <location>
        <begin position="43"/>
        <end position="51"/>
    </location>
</feature>
<feature type="strand" evidence="11">
    <location>
        <begin position="70"/>
        <end position="76"/>
    </location>
</feature>
<feature type="strand" evidence="11">
    <location>
        <begin position="79"/>
        <end position="85"/>
    </location>
</feature>
<feature type="helix" evidence="11">
    <location>
        <begin position="97"/>
        <end position="109"/>
    </location>
</feature>
<feature type="turn" evidence="11">
    <location>
        <begin position="110"/>
        <end position="112"/>
    </location>
</feature>
<feature type="strand" evidence="11">
    <location>
        <begin position="115"/>
        <end position="122"/>
    </location>
</feature>
<feature type="helix" evidence="11">
    <location>
        <begin position="129"/>
        <end position="145"/>
    </location>
</feature>
<feature type="helix" evidence="11">
    <location>
        <begin position="146"/>
        <end position="148"/>
    </location>
</feature>
<feature type="strand" evidence="11">
    <location>
        <begin position="149"/>
        <end position="154"/>
    </location>
</feature>
<feature type="helix" evidence="11">
    <location>
        <begin position="156"/>
        <end position="158"/>
    </location>
</feature>
<feature type="helix" evidence="11">
    <location>
        <begin position="173"/>
        <end position="182"/>
    </location>
</feature>
<feature type="strand" evidence="11">
    <location>
        <begin position="183"/>
        <end position="188"/>
    </location>
</feature>
<feature type="helix" evidence="11">
    <location>
        <begin position="195"/>
        <end position="215"/>
    </location>
</feature>
<gene>
    <name type="primary">GIMAP4</name>
    <name type="synonym">IAN1</name>
    <name type="synonym">IMAP4</name>
    <name type="ORF">MSTP062</name>
</gene>
<comment type="function">
    <text evidence="1 2">During thymocyte development, may play a role in the regulation of apoptosis (By similarity). GTPase which exhibits a higher affinity for GDP than for GTP.</text>
</comment>
<comment type="subunit">
    <text evidence="2">May interact (via IQ domain) with calmodulin/CALM1 only in the absence of Ca(2+) (By similarity). Interacts with BAX, but not with other Bcl-2 family members (By similarity).</text>
</comment>
<comment type="subcellular location">
    <subcellularLocation>
        <location evidence="7">Cytoplasm</location>
        <location evidence="7">Cytosol</location>
    </subcellularLocation>
</comment>
<comment type="tissue specificity">
    <text evidence="7">Highly expressed in spleen and peripheral blood leukocytes that contain mostly T- and B-lymphocytes. Expressed specifically in resting T- and B-lymphocytes and expression significantly decreases during B- or T-lymphocyte activation. Expressed at lower levels in thymus, ovary, colon and small intestine.</text>
</comment>
<comment type="PTM">
    <text evidence="2">Phosphorylated at very low levels in resting splenocytes. Rapidly and transiently phosphorylated in response to splenocyte activation.</text>
</comment>
<comment type="similarity">
    <text evidence="9">Belongs to the TRAFAC class TrmE-Era-EngA-EngB-Septin-like GTPase superfamily. AIG1/Toc34/Toc159-like paraseptin GTPase family. IAN subfamily.</text>
</comment>